<evidence type="ECO:0000250" key="1"/>
<evidence type="ECO:0000255" key="2"/>
<evidence type="ECO:0000255" key="3">
    <source>
        <dbReference type="PROSITE-ProRule" id="PRU00289"/>
    </source>
</evidence>
<evidence type="ECO:0000256" key="4">
    <source>
        <dbReference type="SAM" id="MobiDB-lite"/>
    </source>
</evidence>
<evidence type="ECO:0000305" key="5"/>
<organism>
    <name type="scientific">Mycobacterium leprae (strain TN)</name>
    <dbReference type="NCBI Taxonomy" id="272631"/>
    <lineage>
        <taxon>Bacteria</taxon>
        <taxon>Bacillati</taxon>
        <taxon>Actinomycetota</taxon>
        <taxon>Actinomycetes</taxon>
        <taxon>Mycobacteriales</taxon>
        <taxon>Mycobacteriaceae</taxon>
        <taxon>Mycobacterium</taxon>
    </lineage>
</organism>
<dbReference type="EMBL" id="Z94723">
    <property type="protein sequence ID" value="CAB08120.1"/>
    <property type="status" value="ALT_INIT"/>
    <property type="molecule type" value="Genomic_DNA"/>
</dbReference>
<dbReference type="EMBL" id="AL583920">
    <property type="protein sequence ID" value="CAC31358.1"/>
    <property type="status" value="ALT_INIT"/>
    <property type="molecule type" value="Genomic_DNA"/>
</dbReference>
<dbReference type="PIR" id="C87031">
    <property type="entry name" value="C87031"/>
</dbReference>
<dbReference type="RefSeq" id="WP_010908050.1">
    <property type="nucleotide sequence ID" value="NC_002677.1"/>
</dbReference>
<dbReference type="RefSeq" id="WP_414085527.1">
    <property type="nucleotide sequence ID" value="NC_002677.1"/>
</dbReference>
<dbReference type="SMR" id="O05560"/>
<dbReference type="STRING" id="272631.gene:17574803"/>
<dbReference type="KEGG" id="mle:ML0977"/>
<dbReference type="Leproma" id="ML0977"/>
<dbReference type="eggNOG" id="COG1674">
    <property type="taxonomic scope" value="Bacteria"/>
</dbReference>
<dbReference type="HOGENOM" id="CLU_001981_2_1_11"/>
<dbReference type="Proteomes" id="UP000000806">
    <property type="component" value="Chromosome"/>
</dbReference>
<dbReference type="GO" id="GO:0005886">
    <property type="term" value="C:plasma membrane"/>
    <property type="evidence" value="ECO:0007669"/>
    <property type="project" value="UniProtKB-SubCell"/>
</dbReference>
<dbReference type="GO" id="GO:0005524">
    <property type="term" value="F:ATP binding"/>
    <property type="evidence" value="ECO:0007669"/>
    <property type="project" value="UniProtKB-KW"/>
</dbReference>
<dbReference type="GO" id="GO:0003677">
    <property type="term" value="F:DNA binding"/>
    <property type="evidence" value="ECO:0007669"/>
    <property type="project" value="UniProtKB-KW"/>
</dbReference>
<dbReference type="GO" id="GO:0051301">
    <property type="term" value="P:cell division"/>
    <property type="evidence" value="ECO:0007669"/>
    <property type="project" value="UniProtKB-KW"/>
</dbReference>
<dbReference type="GO" id="GO:0007059">
    <property type="term" value="P:chromosome segregation"/>
    <property type="evidence" value="ECO:0007669"/>
    <property type="project" value="UniProtKB-KW"/>
</dbReference>
<dbReference type="CDD" id="cd01127">
    <property type="entry name" value="TrwB_TraG_TraD_VirD4"/>
    <property type="match status" value="1"/>
</dbReference>
<dbReference type="FunFam" id="1.10.10.10:FF:000236">
    <property type="entry name" value="Cell division protein FtsK"/>
    <property type="match status" value="1"/>
</dbReference>
<dbReference type="FunFam" id="3.40.50.300:FF:000209">
    <property type="entry name" value="Cell division protein FtsK"/>
    <property type="match status" value="1"/>
</dbReference>
<dbReference type="Gene3D" id="3.30.980.40">
    <property type="match status" value="1"/>
</dbReference>
<dbReference type="Gene3D" id="3.40.50.300">
    <property type="entry name" value="P-loop containing nucleotide triphosphate hydrolases"/>
    <property type="match status" value="1"/>
</dbReference>
<dbReference type="Gene3D" id="1.10.10.10">
    <property type="entry name" value="Winged helix-like DNA-binding domain superfamily/Winged helix DNA-binding domain"/>
    <property type="match status" value="1"/>
</dbReference>
<dbReference type="InterPro" id="IPR050206">
    <property type="entry name" value="FtsK/SpoIIIE/SftA"/>
</dbReference>
<dbReference type="InterPro" id="IPR025199">
    <property type="entry name" value="FtsK_4TM"/>
</dbReference>
<dbReference type="InterPro" id="IPR041027">
    <property type="entry name" value="FtsK_alpha"/>
</dbReference>
<dbReference type="InterPro" id="IPR002543">
    <property type="entry name" value="FtsK_dom"/>
</dbReference>
<dbReference type="InterPro" id="IPR018541">
    <property type="entry name" value="Ftsk_gamma"/>
</dbReference>
<dbReference type="InterPro" id="IPR027417">
    <property type="entry name" value="P-loop_NTPase"/>
</dbReference>
<dbReference type="InterPro" id="IPR036388">
    <property type="entry name" value="WH-like_DNA-bd_sf"/>
</dbReference>
<dbReference type="InterPro" id="IPR036390">
    <property type="entry name" value="WH_DNA-bd_sf"/>
</dbReference>
<dbReference type="PANTHER" id="PTHR22683:SF41">
    <property type="entry name" value="DNA TRANSLOCASE FTSK"/>
    <property type="match status" value="1"/>
</dbReference>
<dbReference type="PANTHER" id="PTHR22683">
    <property type="entry name" value="SPORULATION PROTEIN RELATED"/>
    <property type="match status" value="1"/>
</dbReference>
<dbReference type="Pfam" id="PF13491">
    <property type="entry name" value="FtsK_4TM"/>
    <property type="match status" value="1"/>
</dbReference>
<dbReference type="Pfam" id="PF17854">
    <property type="entry name" value="FtsK_alpha"/>
    <property type="match status" value="1"/>
</dbReference>
<dbReference type="Pfam" id="PF09397">
    <property type="entry name" value="FtsK_gamma"/>
    <property type="match status" value="1"/>
</dbReference>
<dbReference type="Pfam" id="PF01580">
    <property type="entry name" value="FtsK_SpoIIIE"/>
    <property type="match status" value="1"/>
</dbReference>
<dbReference type="SMART" id="SM00843">
    <property type="entry name" value="Ftsk_gamma"/>
    <property type="match status" value="1"/>
</dbReference>
<dbReference type="SUPFAM" id="SSF52540">
    <property type="entry name" value="P-loop containing nucleoside triphosphate hydrolases"/>
    <property type="match status" value="1"/>
</dbReference>
<dbReference type="SUPFAM" id="SSF46785">
    <property type="entry name" value="Winged helix' DNA-binding domain"/>
    <property type="match status" value="1"/>
</dbReference>
<dbReference type="PROSITE" id="PS50901">
    <property type="entry name" value="FTSK"/>
    <property type="match status" value="1"/>
</dbReference>
<sequence>MASKTVARSGNRTSSLKATSRGVSQSRRPVPPRPRRNRPAERRNQSLLLAAGLTCGQAIRATWLVAAKGAGGAARSIGRARDIEPGHRRDGIALALLGLAVVVAASSWFDAARPIGAWVDAVLRTFIGSAVVVLPLVIAAVAVVLMRTQPNLDTRPRLILGATLIALSFLGLRHLWSGSPETPEVRRGAAGFLGFAIGGPLSDGLTAWIAAPLLFIGALFGLLLLTGTTVREVPEVLRGMFDTGLFQRDYDDQYDAEYRYDDIPGAPPEDFSGCYDGSLVGGGDAEQKVRGWPVTDLAEVSLQDDVPTTPEPAVQAGTAEVHRLTPRSAEEHRTQALDRAIEGSYTLPSMSLLLTGDPPKKCSAANNHMASAIGGVLTQFKVDAAVTGCTRGPTVTRYEVELGPGVKVEKITALQKNIAYAVATESVRMLAPIPGKSAVGIEVPNTDREAVRLADVLTAPSTRRDHHSLVIGLGKDIEGNFISANLAKMPHLLVAGSTGSGKSSFVNSMLVSLLTRSTPEEVRMILIDPKMVELTPYEGIPHLITPIITQPKKAAAALVWLVEEMEQRYQDMQASRVRHIDVFNEKVRSGEITAPLGSQRVYRPYPYILAIVDELADLMMTAPRDVEDAIVRITQKARAAGIHLVLATQRPSVDVVTGLIKTNVPSRLAFATSSLTDSRVILDQAGAEKLIGMGDGLFLPMGASKPVRLQGAFITDEEIHAVVTACKDQAEPEYTEGVTTAKTTGERTDVDPDIGDDMDVFLQAVELVVSSQFGSTSMLQRKLRVGFAKAGRLMDLMETRSIVGPSEGSKAREVLVKADELAATLALIRGGASADGSNED</sequence>
<proteinExistence type="inferred from homology"/>
<comment type="function">
    <text evidence="1">Essential cell division protein that coordinates cell division and chromosome segregation. The N-terminus is involved in assembly of the cell-division machinery. The C-terminus functions as a DNA motor that moves dsDNA in an ATP-dependent manner towards the dif recombination site, which is located within the replication terminus region. Required for activation of the Xer recombinase, allowing activation of chromosome unlinking by recombination (By similarity).</text>
</comment>
<comment type="subunit">
    <text evidence="1">Homohexamer. Forms a ring that surrounds DNA (By similarity).</text>
</comment>
<comment type="subcellular location">
    <subcellularLocation>
        <location evidence="1">Cell membrane</location>
        <topology evidence="1">Multi-pass membrane protein</topology>
    </subcellularLocation>
    <text evidence="1">Located at the septum.</text>
</comment>
<comment type="domain">
    <text evidence="1">Consists of an N-terminal domain, which is sufficient for the localization to the septal ring and is required for cell division, followed by a linker domain, and a C-terminal domain, which forms the translocation motor involved in chromosome segregation. The C-terminal domain can be further subdivided into alpha, beta and gamma subdomains. The alpha and beta subdomains form the DNA pump, and the gamma subdomain is a regulatory subdomain (By similarity).</text>
</comment>
<comment type="similarity">
    <text evidence="5">Belongs to the FtsK/SpoIIIE/SftA family.</text>
</comment>
<comment type="sequence caution" evidence="5">
    <conflict type="erroneous initiation">
        <sequence resource="EMBL-CDS" id="CAB08120"/>
    </conflict>
    <text>Extended N-terminus.</text>
</comment>
<comment type="sequence caution" evidence="5">
    <conflict type="erroneous initiation">
        <sequence resource="EMBL-CDS" id="CAC31358"/>
    </conflict>
    <text>Extended N-terminus.</text>
</comment>
<feature type="chain" id="PRO_0000098270" description="DNA translocase FtsK">
    <location>
        <begin position="1"/>
        <end position="840"/>
    </location>
</feature>
<feature type="transmembrane region" description="Helical" evidence="2">
    <location>
        <begin position="92"/>
        <end position="112"/>
    </location>
</feature>
<feature type="transmembrane region" description="Helical" evidence="2">
    <location>
        <begin position="126"/>
        <end position="146"/>
    </location>
</feature>
<feature type="transmembrane region" description="Helical" evidence="2">
    <location>
        <begin position="158"/>
        <end position="178"/>
    </location>
</feature>
<feature type="transmembrane region" description="Helical" evidence="2">
    <location>
        <begin position="205"/>
        <end position="225"/>
    </location>
</feature>
<feature type="topological domain" description="Cytoplasmic" evidence="2">
    <location>
        <begin position="226"/>
        <end position="840"/>
    </location>
</feature>
<feature type="domain" description="FtsK" evidence="3">
    <location>
        <begin position="479"/>
        <end position="679"/>
    </location>
</feature>
<feature type="region of interest" description="Disordered" evidence="4">
    <location>
        <begin position="1"/>
        <end position="42"/>
    </location>
</feature>
<feature type="compositionally biased region" description="Polar residues" evidence="4">
    <location>
        <begin position="1"/>
        <end position="26"/>
    </location>
</feature>
<feature type="binding site" evidence="3">
    <location>
        <begin position="499"/>
        <end position="504"/>
    </location>
    <ligand>
        <name>ATP</name>
        <dbReference type="ChEBI" id="CHEBI:30616"/>
    </ligand>
</feature>
<reference key="1">
    <citation type="journal article" date="2001" name="Nature">
        <title>Massive gene decay in the leprosy bacillus.</title>
        <authorList>
            <person name="Cole S.T."/>
            <person name="Eiglmeier K."/>
            <person name="Parkhill J."/>
            <person name="James K.D."/>
            <person name="Thomson N.R."/>
            <person name="Wheeler P.R."/>
            <person name="Honore N."/>
            <person name="Garnier T."/>
            <person name="Churcher C.M."/>
            <person name="Harris D.E."/>
            <person name="Mungall K.L."/>
            <person name="Basham D."/>
            <person name="Brown D."/>
            <person name="Chillingworth T."/>
            <person name="Connor R."/>
            <person name="Davies R.M."/>
            <person name="Devlin K."/>
            <person name="Duthoy S."/>
            <person name="Feltwell T."/>
            <person name="Fraser A."/>
            <person name="Hamlin N."/>
            <person name="Holroyd S."/>
            <person name="Hornsby T."/>
            <person name="Jagels K."/>
            <person name="Lacroix C."/>
            <person name="Maclean J."/>
            <person name="Moule S."/>
            <person name="Murphy L.D."/>
            <person name="Oliver K."/>
            <person name="Quail M.A."/>
            <person name="Rajandream M.A."/>
            <person name="Rutherford K.M."/>
            <person name="Rutter S."/>
            <person name="Seeger K."/>
            <person name="Simon S."/>
            <person name="Simmonds M."/>
            <person name="Skelton J."/>
            <person name="Squares R."/>
            <person name="Squares S."/>
            <person name="Stevens K."/>
            <person name="Taylor K."/>
            <person name="Whitehead S."/>
            <person name="Woodward J.R."/>
            <person name="Barrell B.G."/>
        </authorList>
    </citation>
    <scope>NUCLEOTIDE SEQUENCE [LARGE SCALE GENOMIC DNA]</scope>
    <source>
        <strain>TN</strain>
    </source>
</reference>
<accession>O05560</accession>
<keyword id="KW-0067">ATP-binding</keyword>
<keyword id="KW-0131">Cell cycle</keyword>
<keyword id="KW-0132">Cell division</keyword>
<keyword id="KW-1003">Cell membrane</keyword>
<keyword id="KW-0159">Chromosome partition</keyword>
<keyword id="KW-0238">DNA-binding</keyword>
<keyword id="KW-0472">Membrane</keyword>
<keyword id="KW-0547">Nucleotide-binding</keyword>
<keyword id="KW-1185">Reference proteome</keyword>
<keyword id="KW-0812">Transmembrane</keyword>
<keyword id="KW-1133">Transmembrane helix</keyword>
<gene>
    <name type="primary">ftsK</name>
    <name type="ordered locus">ML0977</name>
    <name type="ORF">MLCB33.09c</name>
</gene>
<protein>
    <recommendedName>
        <fullName>DNA translocase FtsK</fullName>
    </recommendedName>
</protein>
<name>FTSK_MYCLE</name>